<comment type="function">
    <text evidence="1">Core subunit of the mitochondrial membrane respiratory chain NADH dehydrogenase (Complex I) which catalyzes electron transfer from NADH through the respiratory chain, using ubiquinone as an electron acceptor. Essential for the catalytic activity and assembly of complex I.</text>
</comment>
<comment type="catalytic activity">
    <reaction evidence="1">
        <text>a ubiquinone + NADH + 5 H(+)(in) = a ubiquinol + NAD(+) + 4 H(+)(out)</text>
        <dbReference type="Rhea" id="RHEA:29091"/>
        <dbReference type="Rhea" id="RHEA-COMP:9565"/>
        <dbReference type="Rhea" id="RHEA-COMP:9566"/>
        <dbReference type="ChEBI" id="CHEBI:15378"/>
        <dbReference type="ChEBI" id="CHEBI:16389"/>
        <dbReference type="ChEBI" id="CHEBI:17976"/>
        <dbReference type="ChEBI" id="CHEBI:57540"/>
        <dbReference type="ChEBI" id="CHEBI:57945"/>
        <dbReference type="EC" id="7.1.1.2"/>
    </reaction>
</comment>
<comment type="subunit">
    <text evidence="2">Core subunit of respiratory chain NADH dehydrogenase (Complex I) which is composed of 45 different subunits.</text>
</comment>
<comment type="subcellular location">
    <subcellularLocation>
        <location evidence="2">Mitochondrion inner membrane</location>
        <topology evidence="3">Multi-pass membrane protein</topology>
    </subcellularLocation>
</comment>
<comment type="similarity">
    <text evidence="4">Belongs to the complex I subunit 6 family.</text>
</comment>
<geneLocation type="mitochondrion"/>
<feature type="chain" id="PRO_0000118316" description="NADH-ubiquinone oxidoreductase chain 6">
    <location>
        <begin position="1"/>
        <end position="175"/>
    </location>
</feature>
<feature type="transmembrane region" description="Helical" evidence="3">
    <location>
        <begin position="1"/>
        <end position="21"/>
    </location>
</feature>
<feature type="transmembrane region" description="Helical" evidence="3">
    <location>
        <begin position="25"/>
        <end position="45"/>
    </location>
</feature>
<feature type="transmembrane region" description="Helical" evidence="3">
    <location>
        <begin position="47"/>
        <end position="67"/>
    </location>
</feature>
<feature type="transmembrane region" description="Helical" evidence="3">
    <location>
        <begin position="88"/>
        <end position="108"/>
    </location>
</feature>
<feature type="transmembrane region" description="Helical" evidence="3">
    <location>
        <begin position="149"/>
        <end position="169"/>
    </location>
</feature>
<feature type="helix" evidence="5">
    <location>
        <begin position="5"/>
        <end position="21"/>
    </location>
</feature>
<feature type="helix" evidence="5">
    <location>
        <begin position="26"/>
        <end position="46"/>
    </location>
</feature>
<feature type="helix" evidence="5">
    <location>
        <begin position="50"/>
        <end position="74"/>
    </location>
</feature>
<feature type="helix" evidence="5">
    <location>
        <begin position="87"/>
        <end position="108"/>
    </location>
</feature>
<feature type="strand" evidence="6">
    <location>
        <begin position="114"/>
        <end position="116"/>
    </location>
</feature>
<feature type="helix" evidence="5">
    <location>
        <begin position="124"/>
        <end position="127"/>
    </location>
</feature>
<feature type="helix" evidence="5">
    <location>
        <begin position="138"/>
        <end position="144"/>
    </location>
</feature>
<feature type="turn" evidence="5">
    <location>
        <begin position="145"/>
        <end position="149"/>
    </location>
</feature>
<feature type="helix" evidence="5">
    <location>
        <begin position="151"/>
        <end position="171"/>
    </location>
</feature>
<name>NU6M_PIG</name>
<protein>
    <recommendedName>
        <fullName>NADH-ubiquinone oxidoreductase chain 6</fullName>
        <ecNumber evidence="1">7.1.1.2</ecNumber>
    </recommendedName>
    <alternativeName>
        <fullName>NADH dehydrogenase subunit 6</fullName>
    </alternativeName>
</protein>
<evidence type="ECO:0000250" key="1">
    <source>
        <dbReference type="UniProtKB" id="P03923"/>
    </source>
</evidence>
<evidence type="ECO:0000250" key="2">
    <source>
        <dbReference type="UniProtKB" id="P03924"/>
    </source>
</evidence>
<evidence type="ECO:0000255" key="3"/>
<evidence type="ECO:0000305" key="4"/>
<evidence type="ECO:0007829" key="5">
    <source>
        <dbReference type="PDB" id="7V2H"/>
    </source>
</evidence>
<evidence type="ECO:0007829" key="6">
    <source>
        <dbReference type="PDB" id="7VYS"/>
    </source>
</evidence>
<proteinExistence type="evidence at protein level"/>
<reference key="1">
    <citation type="journal article" date="1998" name="J. Mol. Evol.">
        <title>The complete mitochondrial DNA sequence of the pig (Sus scrofa).</title>
        <authorList>
            <person name="Ursing B.M."/>
            <person name="Arnason U."/>
        </authorList>
    </citation>
    <scope>NUCLEOTIDE SEQUENCE [GENOMIC DNA]</scope>
</reference>
<reference key="2">
    <citation type="journal article" date="1999" name="Gene">
        <title>Complete nucleotide sequence of pig (Sus scrofa) mitochondrial genome and dating evolutionary divergence within artiodactyla.</title>
        <authorList>
            <person name="Lin C.S."/>
            <person name="Sun Y.L."/>
            <person name="Liu C.Y."/>
            <person name="Yang P.C."/>
            <person name="Chang L.C."/>
            <person name="Cheng I.C."/>
            <person name="Mao S.J.T."/>
            <person name="Huang M.C."/>
        </authorList>
    </citation>
    <scope>NUCLEOTIDE SEQUENCE [LARGE SCALE GENOMIC DNA]</scope>
    <source>
        <strain>Landrace</strain>
    </source>
</reference>
<dbReference type="EC" id="7.1.1.2" evidence="1"/>
<dbReference type="EMBL" id="AJ002189">
    <property type="protein sequence ID" value="CAA05238.1"/>
    <property type="molecule type" value="Genomic_DNA"/>
</dbReference>
<dbReference type="EMBL" id="AF034253">
    <property type="protein sequence ID" value="AAD34196.1"/>
    <property type="molecule type" value="Genomic_DNA"/>
</dbReference>
<dbReference type="PIR" id="T10983">
    <property type="entry name" value="T10983"/>
</dbReference>
<dbReference type="RefSeq" id="NP_008645.1">
    <property type="nucleotide sequence ID" value="NC_000845.1"/>
</dbReference>
<dbReference type="PDB" id="5GPN">
    <property type="method" value="EM"/>
    <property type="resolution" value="5.40 A"/>
    <property type="chains" value="k/l=1-175"/>
</dbReference>
<dbReference type="PDB" id="5GUP">
    <property type="method" value="EM"/>
    <property type="resolution" value="4.00 A"/>
    <property type="chains" value="m=1-175"/>
</dbReference>
<dbReference type="PDB" id="7V2C">
    <property type="method" value="EM"/>
    <property type="resolution" value="2.90 A"/>
    <property type="chains" value="m=1-175"/>
</dbReference>
<dbReference type="PDB" id="7V2D">
    <property type="method" value="EM"/>
    <property type="resolution" value="3.30 A"/>
    <property type="chains" value="m=1-175"/>
</dbReference>
<dbReference type="PDB" id="7V2E">
    <property type="method" value="EM"/>
    <property type="resolution" value="2.80 A"/>
    <property type="chains" value="m=1-175"/>
</dbReference>
<dbReference type="PDB" id="7V2F">
    <property type="method" value="EM"/>
    <property type="resolution" value="3.10 A"/>
    <property type="chains" value="m=1-175"/>
</dbReference>
<dbReference type="PDB" id="7V2H">
    <property type="method" value="EM"/>
    <property type="resolution" value="2.50 A"/>
    <property type="chains" value="m=1-175"/>
</dbReference>
<dbReference type="PDB" id="7V2K">
    <property type="method" value="EM"/>
    <property type="resolution" value="2.70 A"/>
    <property type="chains" value="m=1-175"/>
</dbReference>
<dbReference type="PDB" id="7V2R">
    <property type="method" value="EM"/>
    <property type="resolution" value="2.60 A"/>
    <property type="chains" value="m=1-175"/>
</dbReference>
<dbReference type="PDB" id="7V30">
    <property type="method" value="EM"/>
    <property type="resolution" value="2.70 A"/>
    <property type="chains" value="m=1-175"/>
</dbReference>
<dbReference type="PDB" id="7V31">
    <property type="method" value="EM"/>
    <property type="resolution" value="2.90 A"/>
    <property type="chains" value="m=1-175"/>
</dbReference>
<dbReference type="PDB" id="7V32">
    <property type="method" value="EM"/>
    <property type="resolution" value="3.20 A"/>
    <property type="chains" value="m=1-175"/>
</dbReference>
<dbReference type="PDB" id="7V33">
    <property type="method" value="EM"/>
    <property type="resolution" value="2.60 A"/>
    <property type="chains" value="m=1-175"/>
</dbReference>
<dbReference type="PDB" id="7V3M">
    <property type="method" value="EM"/>
    <property type="resolution" value="2.90 A"/>
    <property type="chains" value="m=1-175"/>
</dbReference>
<dbReference type="PDB" id="7VBL">
    <property type="method" value="EM"/>
    <property type="resolution" value="2.60 A"/>
    <property type="chains" value="m=1-175"/>
</dbReference>
<dbReference type="PDB" id="7VBP">
    <property type="method" value="EM"/>
    <property type="resolution" value="2.80 A"/>
    <property type="chains" value="m=1-175"/>
</dbReference>
<dbReference type="PDB" id="7VC0">
    <property type="method" value="EM"/>
    <property type="resolution" value="2.60 A"/>
    <property type="chains" value="m=1-175"/>
</dbReference>
<dbReference type="PDB" id="7VWL">
    <property type="method" value="EM"/>
    <property type="resolution" value="2.70 A"/>
    <property type="chains" value="m=1-175"/>
</dbReference>
<dbReference type="PDB" id="7VXS">
    <property type="method" value="EM"/>
    <property type="resolution" value="2.90 A"/>
    <property type="chains" value="m=1-175"/>
</dbReference>
<dbReference type="PDB" id="7VY1">
    <property type="method" value="EM"/>
    <property type="resolution" value="3.30 A"/>
    <property type="chains" value="m=1-175"/>
</dbReference>
<dbReference type="PDB" id="7VY9">
    <property type="method" value="EM"/>
    <property type="resolution" value="2.90 A"/>
    <property type="chains" value="m=1-175"/>
</dbReference>
<dbReference type="PDB" id="7VYE">
    <property type="method" value="EM"/>
    <property type="resolution" value="3.10 A"/>
    <property type="chains" value="m=1-175"/>
</dbReference>
<dbReference type="PDB" id="7VYG">
    <property type="method" value="EM"/>
    <property type="resolution" value="2.90 A"/>
    <property type="chains" value="m=1-175"/>
</dbReference>
<dbReference type="PDB" id="7VYI">
    <property type="method" value="EM"/>
    <property type="resolution" value="3.10 A"/>
    <property type="chains" value="m=1-175"/>
</dbReference>
<dbReference type="PDB" id="7VYS">
    <property type="method" value="EM"/>
    <property type="resolution" value="2.50 A"/>
    <property type="chains" value="m=1-175"/>
</dbReference>
<dbReference type="PDB" id="7VZ8">
    <property type="method" value="EM"/>
    <property type="resolution" value="2.70 A"/>
    <property type="chains" value="m=1-175"/>
</dbReference>
<dbReference type="PDB" id="7VZV">
    <property type="method" value="EM"/>
    <property type="resolution" value="3.20 A"/>
    <property type="chains" value="m=1-175"/>
</dbReference>
<dbReference type="PDB" id="7VZW">
    <property type="method" value="EM"/>
    <property type="resolution" value="3.20 A"/>
    <property type="chains" value="m=1-175"/>
</dbReference>
<dbReference type="PDB" id="7W00">
    <property type="method" value="EM"/>
    <property type="resolution" value="3.50 A"/>
    <property type="chains" value="m=1-175"/>
</dbReference>
<dbReference type="PDB" id="7W0H">
    <property type="method" value="EM"/>
    <property type="resolution" value="3.40 A"/>
    <property type="chains" value="m=1-175"/>
</dbReference>
<dbReference type="PDB" id="7W0R">
    <property type="method" value="EM"/>
    <property type="resolution" value="2.80 A"/>
    <property type="chains" value="m=1-175"/>
</dbReference>
<dbReference type="PDB" id="7W0Y">
    <property type="method" value="EM"/>
    <property type="resolution" value="3.40 A"/>
    <property type="chains" value="m=1-175"/>
</dbReference>
<dbReference type="PDB" id="7W1O">
    <property type="method" value="EM"/>
    <property type="resolution" value="3.50 A"/>
    <property type="chains" value="m=1-175"/>
</dbReference>
<dbReference type="PDB" id="7W1P">
    <property type="method" value="EM"/>
    <property type="resolution" value="3.10 A"/>
    <property type="chains" value="m=1-175"/>
</dbReference>
<dbReference type="PDB" id="7W1T">
    <property type="method" value="EM"/>
    <property type="resolution" value="3.00 A"/>
    <property type="chains" value="m=1-175"/>
</dbReference>
<dbReference type="PDB" id="7W1U">
    <property type="method" value="EM"/>
    <property type="resolution" value="3.20 A"/>
    <property type="chains" value="m=1-175"/>
</dbReference>
<dbReference type="PDB" id="7W1V">
    <property type="method" value="EM"/>
    <property type="resolution" value="3.00 A"/>
    <property type="chains" value="m=1-175"/>
</dbReference>
<dbReference type="PDB" id="7W1Z">
    <property type="method" value="EM"/>
    <property type="resolution" value="2.60 A"/>
    <property type="chains" value="m=1-175"/>
</dbReference>
<dbReference type="PDB" id="7W20">
    <property type="method" value="EM"/>
    <property type="resolution" value="3.00 A"/>
    <property type="chains" value="m=1-175"/>
</dbReference>
<dbReference type="PDB" id="7W2K">
    <property type="method" value="EM"/>
    <property type="resolution" value="2.90 A"/>
    <property type="chains" value="m=1-175"/>
</dbReference>
<dbReference type="PDB" id="7W2L">
    <property type="method" value="EM"/>
    <property type="resolution" value="3.00 A"/>
    <property type="chains" value="m=1-175"/>
</dbReference>
<dbReference type="PDB" id="7W2R">
    <property type="method" value="EM"/>
    <property type="resolution" value="2.90 A"/>
    <property type="chains" value="m=1-175"/>
</dbReference>
<dbReference type="PDB" id="7W2U">
    <property type="method" value="EM"/>
    <property type="resolution" value="2.60 A"/>
    <property type="chains" value="m=1-175"/>
</dbReference>
<dbReference type="PDB" id="7W2Y">
    <property type="method" value="EM"/>
    <property type="resolution" value="2.70 A"/>
    <property type="chains" value="m=1-175"/>
</dbReference>
<dbReference type="PDB" id="7W31">
    <property type="method" value="EM"/>
    <property type="resolution" value="3.10 A"/>
    <property type="chains" value="m=1-175"/>
</dbReference>
<dbReference type="PDB" id="7W32">
    <property type="method" value="EM"/>
    <property type="resolution" value="2.90 A"/>
    <property type="chains" value="m=1-175"/>
</dbReference>
<dbReference type="PDB" id="7W35">
    <property type="method" value="EM"/>
    <property type="resolution" value="3.00 A"/>
    <property type="chains" value="m=1-175"/>
</dbReference>
<dbReference type="PDB" id="7W4C">
    <property type="method" value="EM"/>
    <property type="resolution" value="2.70 A"/>
    <property type="chains" value="m=1-175"/>
</dbReference>
<dbReference type="PDB" id="7W4D">
    <property type="method" value="EM"/>
    <property type="resolution" value="3.00 A"/>
    <property type="chains" value="m=1-175"/>
</dbReference>
<dbReference type="PDB" id="7W4E">
    <property type="method" value="EM"/>
    <property type="resolution" value="3.00 A"/>
    <property type="chains" value="m=1-175"/>
</dbReference>
<dbReference type="PDB" id="7W4F">
    <property type="method" value="EM"/>
    <property type="resolution" value="2.70 A"/>
    <property type="chains" value="m=1-175"/>
</dbReference>
<dbReference type="PDB" id="7W4G">
    <property type="method" value="EM"/>
    <property type="resolution" value="3.10 A"/>
    <property type="chains" value="m=1-175"/>
</dbReference>
<dbReference type="PDB" id="7W4J">
    <property type="method" value="EM"/>
    <property type="resolution" value="3.20 A"/>
    <property type="chains" value="m=1-175"/>
</dbReference>
<dbReference type="PDB" id="7W4K">
    <property type="method" value="EM"/>
    <property type="resolution" value="3.20 A"/>
    <property type="chains" value="m=1-175"/>
</dbReference>
<dbReference type="PDB" id="7W4L">
    <property type="method" value="EM"/>
    <property type="resolution" value="3.10 A"/>
    <property type="chains" value="m=1-175"/>
</dbReference>
<dbReference type="PDB" id="7W4M">
    <property type="method" value="EM"/>
    <property type="resolution" value="3.30 A"/>
    <property type="chains" value="m=1-175"/>
</dbReference>
<dbReference type="PDB" id="7W4N">
    <property type="method" value="EM"/>
    <property type="resolution" value="3.00 A"/>
    <property type="chains" value="m=1-175"/>
</dbReference>
<dbReference type="PDB" id="7W4Q">
    <property type="method" value="EM"/>
    <property type="resolution" value="3.30 A"/>
    <property type="chains" value="m=1-175"/>
</dbReference>
<dbReference type="PDB" id="8UD1">
    <property type="method" value="EM"/>
    <property type="resolution" value="2.10 A"/>
    <property type="chains" value="1J=1-175"/>
</dbReference>
<dbReference type="PDB" id="8UEO">
    <property type="method" value="EM"/>
    <property type="resolution" value="3.80 A"/>
    <property type="chains" value="1J=1-175"/>
</dbReference>
<dbReference type="PDB" id="8UEP">
    <property type="method" value="EM"/>
    <property type="resolution" value="3.40 A"/>
    <property type="chains" value="1J=1-175"/>
</dbReference>
<dbReference type="PDB" id="8UEQ">
    <property type="method" value="EM"/>
    <property type="resolution" value="3.40 A"/>
    <property type="chains" value="1J=1-175"/>
</dbReference>
<dbReference type="PDB" id="8UER">
    <property type="method" value="EM"/>
    <property type="resolution" value="3.50 A"/>
    <property type="chains" value="1J=1-175"/>
</dbReference>
<dbReference type="PDB" id="8UES">
    <property type="method" value="EM"/>
    <property type="resolution" value="3.60 A"/>
    <property type="chains" value="1J=1-175"/>
</dbReference>
<dbReference type="PDB" id="8UET">
    <property type="method" value="EM"/>
    <property type="resolution" value="3.70 A"/>
    <property type="chains" value="1J=1-175"/>
</dbReference>
<dbReference type="PDB" id="8UEU">
    <property type="method" value="EM"/>
    <property type="resolution" value="3.60 A"/>
    <property type="chains" value="1J=1-175"/>
</dbReference>
<dbReference type="PDB" id="8UEV">
    <property type="method" value="EM"/>
    <property type="resolution" value="3.70 A"/>
    <property type="chains" value="1J=1-175"/>
</dbReference>
<dbReference type="PDB" id="8UEW">
    <property type="method" value="EM"/>
    <property type="resolution" value="3.60 A"/>
    <property type="chains" value="1J=1-175"/>
</dbReference>
<dbReference type="PDB" id="8UEX">
    <property type="method" value="EM"/>
    <property type="resolution" value="3.90 A"/>
    <property type="chains" value="1J=1-175"/>
</dbReference>
<dbReference type="PDB" id="8UEY">
    <property type="method" value="EM"/>
    <property type="resolution" value="3.60 A"/>
    <property type="chains" value="1J=1-175"/>
</dbReference>
<dbReference type="PDB" id="8UEZ">
    <property type="method" value="EM"/>
    <property type="resolution" value="3.50 A"/>
    <property type="chains" value="1J=1-175"/>
</dbReference>
<dbReference type="PDB" id="8UGH">
    <property type="method" value="EM"/>
    <property type="resolution" value="2.10 A"/>
    <property type="chains" value="1J=1-175"/>
</dbReference>
<dbReference type="PDB" id="8UGI">
    <property type="method" value="EM"/>
    <property type="resolution" value="2.10 A"/>
    <property type="chains" value="1J=1-175"/>
</dbReference>
<dbReference type="PDB" id="8UGJ">
    <property type="method" value="EM"/>
    <property type="resolution" value="2.30 A"/>
    <property type="chains" value="1J=1-175"/>
</dbReference>
<dbReference type="PDB" id="8UGN">
    <property type="method" value="EM"/>
    <property type="resolution" value="2.70 A"/>
    <property type="chains" value="1J/5J=1-175"/>
</dbReference>
<dbReference type="PDB" id="8UGR">
    <property type="method" value="EM"/>
    <property type="resolution" value="6.50 A"/>
    <property type="chains" value="1J/5J=1-175"/>
</dbReference>
<dbReference type="PDBsum" id="5GPN"/>
<dbReference type="PDBsum" id="5GUP"/>
<dbReference type="PDBsum" id="7V2C"/>
<dbReference type="PDBsum" id="7V2D"/>
<dbReference type="PDBsum" id="7V2E"/>
<dbReference type="PDBsum" id="7V2F"/>
<dbReference type="PDBsum" id="7V2H"/>
<dbReference type="PDBsum" id="7V2K"/>
<dbReference type="PDBsum" id="7V2R"/>
<dbReference type="PDBsum" id="7V30"/>
<dbReference type="PDBsum" id="7V31"/>
<dbReference type="PDBsum" id="7V32"/>
<dbReference type="PDBsum" id="7V33"/>
<dbReference type="PDBsum" id="7V3M"/>
<dbReference type="PDBsum" id="7VBL"/>
<dbReference type="PDBsum" id="7VBP"/>
<dbReference type="PDBsum" id="7VC0"/>
<dbReference type="PDBsum" id="7VWL"/>
<dbReference type="PDBsum" id="7VXS"/>
<dbReference type="PDBsum" id="7VY1"/>
<dbReference type="PDBsum" id="7VY9"/>
<dbReference type="PDBsum" id="7VYE"/>
<dbReference type="PDBsum" id="7VYG"/>
<dbReference type="PDBsum" id="7VYI"/>
<dbReference type="PDBsum" id="7VYS"/>
<dbReference type="PDBsum" id="7VZ8"/>
<dbReference type="PDBsum" id="7VZV"/>
<dbReference type="PDBsum" id="7VZW"/>
<dbReference type="PDBsum" id="7W00"/>
<dbReference type="PDBsum" id="7W0H"/>
<dbReference type="PDBsum" id="7W0R"/>
<dbReference type="PDBsum" id="7W0Y"/>
<dbReference type="PDBsum" id="7W1O"/>
<dbReference type="PDBsum" id="7W1P"/>
<dbReference type="PDBsum" id="7W1T"/>
<dbReference type="PDBsum" id="7W1U"/>
<dbReference type="PDBsum" id="7W1V"/>
<dbReference type="PDBsum" id="7W1Z"/>
<dbReference type="PDBsum" id="7W20"/>
<dbReference type="PDBsum" id="7W2K"/>
<dbReference type="PDBsum" id="7W2L"/>
<dbReference type="PDBsum" id="7W2R"/>
<dbReference type="PDBsum" id="7W2U"/>
<dbReference type="PDBsum" id="7W2Y"/>
<dbReference type="PDBsum" id="7W31"/>
<dbReference type="PDBsum" id="7W32"/>
<dbReference type="PDBsum" id="7W35"/>
<dbReference type="PDBsum" id="7W4C"/>
<dbReference type="PDBsum" id="7W4D"/>
<dbReference type="PDBsum" id="7W4E"/>
<dbReference type="PDBsum" id="7W4F"/>
<dbReference type="PDBsum" id="7W4G"/>
<dbReference type="PDBsum" id="7W4J"/>
<dbReference type="PDBsum" id="7W4K"/>
<dbReference type="PDBsum" id="7W4L"/>
<dbReference type="PDBsum" id="7W4M"/>
<dbReference type="PDBsum" id="7W4N"/>
<dbReference type="PDBsum" id="7W4Q"/>
<dbReference type="PDBsum" id="8UD1"/>
<dbReference type="PDBsum" id="8UEO"/>
<dbReference type="PDBsum" id="8UEP"/>
<dbReference type="PDBsum" id="8UEQ"/>
<dbReference type="PDBsum" id="8UER"/>
<dbReference type="PDBsum" id="8UES"/>
<dbReference type="PDBsum" id="8UET"/>
<dbReference type="PDBsum" id="8UEU"/>
<dbReference type="PDBsum" id="8UEV"/>
<dbReference type="PDBsum" id="8UEW"/>
<dbReference type="PDBsum" id="8UEX"/>
<dbReference type="PDBsum" id="8UEY"/>
<dbReference type="PDBsum" id="8UEZ"/>
<dbReference type="PDBsum" id="8UGH"/>
<dbReference type="PDBsum" id="8UGI"/>
<dbReference type="PDBsum" id="8UGJ"/>
<dbReference type="PDBsum" id="8UGN"/>
<dbReference type="PDBsum" id="8UGR"/>
<dbReference type="EMDB" id="EMD-31881"/>
<dbReference type="EMDB" id="EMD-31884"/>
<dbReference type="EMDB" id="EMD-31887"/>
<dbReference type="EMDB" id="EMD-32155"/>
<dbReference type="EMDB" id="EMD-32187"/>
<dbReference type="EMDB" id="EMD-32191"/>
<dbReference type="EMDB" id="EMD-32197"/>
<dbReference type="EMDB" id="EMD-32202"/>
<dbReference type="EMDB" id="EMD-32204"/>
<dbReference type="EMDB" id="EMD-32206"/>
<dbReference type="EMDB" id="EMD-32214"/>
<dbReference type="EMDB" id="EMD-32222"/>
<dbReference type="EMDB" id="EMD-32230"/>
<dbReference type="EMDB" id="EMD-32231"/>
<dbReference type="EMDB" id="EMD-32232"/>
<dbReference type="EMDB" id="EMD-32242"/>
<dbReference type="EMDB" id="EMD-32248"/>
<dbReference type="EMDB" id="EMD-32249"/>
<dbReference type="EMDB" id="EMD-32253"/>
<dbReference type="EMDB" id="EMD-32254"/>
<dbReference type="EMDB" id="EMD-32255"/>
<dbReference type="EMDB" id="EMD-32256"/>
<dbReference type="EMDB" id="EMD-32257"/>
<dbReference type="EMDB" id="EMD-32259"/>
<dbReference type="EMDB" id="EMD-32260"/>
<dbReference type="EMDB" id="EMD-32263"/>
<dbReference type="EMDB" id="EMD-32264"/>
<dbReference type="EMDB" id="EMD-32265"/>
<dbReference type="EMDB" id="EMD-32266"/>
<dbReference type="EMDB" id="EMD-32267"/>
<dbReference type="EMDB" id="EMD-32269"/>
<dbReference type="EMDB" id="EMD-32270"/>
<dbReference type="EMDB" id="EMD-32271"/>
<dbReference type="EMDB" id="EMD-32300"/>
<dbReference type="EMDB" id="EMD-32301"/>
<dbReference type="EMDB" id="EMD-32302"/>
<dbReference type="EMDB" id="EMD-32303"/>
<dbReference type="EMDB" id="EMD-32304"/>
<dbReference type="EMDB" id="EMD-32305"/>
<dbReference type="EMDB" id="EMD-32306"/>
<dbReference type="EMDB" id="EMD-32307"/>
<dbReference type="EMDB" id="EMD-32308"/>
<dbReference type="EMDB" id="EMD-32309"/>
<dbReference type="EMDB" id="EMD-32312"/>
<dbReference type="EMDB" id="EMD-42143"/>
<dbReference type="EMDB" id="EMD-42165"/>
<dbReference type="EMDB" id="EMD-42166"/>
<dbReference type="EMDB" id="EMD-42167"/>
<dbReference type="EMDB" id="EMD-42168"/>
<dbReference type="EMDB" id="EMD-42169"/>
<dbReference type="EMDB" id="EMD-42170"/>
<dbReference type="EMDB" id="EMD-42171"/>
<dbReference type="EMDB" id="EMD-42172"/>
<dbReference type="EMDB" id="EMD-42173"/>
<dbReference type="EMDB" id="EMD-42174"/>
<dbReference type="EMDB" id="EMD-42175"/>
<dbReference type="EMDB" id="EMD-42176"/>
<dbReference type="EMDB" id="EMD-42225"/>
<dbReference type="EMDB" id="EMD-42226"/>
<dbReference type="EMDB" id="EMD-42227"/>
<dbReference type="EMDB" id="EMD-42230"/>
<dbReference type="EMDB" id="EMD-42233"/>
<dbReference type="EMDB" id="EMD-9534"/>
<dbReference type="EMDB" id="EMD-9539"/>
<dbReference type="SMR" id="O79882"/>
<dbReference type="FunCoup" id="O79882">
    <property type="interactions" value="154"/>
</dbReference>
<dbReference type="STRING" id="9823.ENSSSCP00000019146"/>
<dbReference type="PaxDb" id="9823-ENSSSCP00000019146"/>
<dbReference type="Ensembl" id="ENSSSCT00000019687.1">
    <property type="protein sequence ID" value="ENSSSCP00000019146.1"/>
    <property type="gene ID" value="ENSSSCG00000018092.1"/>
</dbReference>
<dbReference type="Ensembl" id="ENSSSCT00070061689.1">
    <property type="protein sequence ID" value="ENSSSCP00070052589.1"/>
    <property type="gene ID" value="ENSSSCG00070030652.1"/>
</dbReference>
<dbReference type="Ensembl" id="ENSSSCT00085000034">
    <property type="protein sequence ID" value="ENSSSCP00085000013"/>
    <property type="gene ID" value="ENSSSCG00085000034"/>
</dbReference>
<dbReference type="Ensembl" id="ENSSSCT00090000034">
    <property type="protein sequence ID" value="ENSSSCP00090000013"/>
    <property type="gene ID" value="ENSSSCG00090000034"/>
</dbReference>
<dbReference type="Ensembl" id="ENSSSCT00105000034">
    <property type="protein sequence ID" value="ENSSSCP00105000013"/>
    <property type="gene ID" value="ENSSSCG00105000034"/>
</dbReference>
<dbReference type="Ensembl" id="ENSSSCT00110000034">
    <property type="protein sequence ID" value="ENSSSCP00110000013"/>
    <property type="gene ID" value="ENSSSCG00110000034"/>
</dbReference>
<dbReference type="Ensembl" id="ENSSSCT00115000034">
    <property type="protein sequence ID" value="ENSSSCP00115000013"/>
    <property type="gene ID" value="ENSSSCG00115000034"/>
</dbReference>
<dbReference type="Ensembl" id="ENSSSCT00130000034">
    <property type="protein sequence ID" value="ENSSSCP00130000013"/>
    <property type="gene ID" value="ENSSSCG00130000034"/>
</dbReference>
<dbReference type="GeneID" id="808512"/>
<dbReference type="KEGG" id="ssc:808512"/>
<dbReference type="CTD" id="4541"/>
<dbReference type="VGNC" id="VGNC:99797">
    <property type="gene designation" value="MT-ND6"/>
</dbReference>
<dbReference type="eggNOG" id="ENOG502S2Q2">
    <property type="taxonomic scope" value="Eukaryota"/>
</dbReference>
<dbReference type="GeneTree" id="ENSGT00390000003988"/>
<dbReference type="HOGENOM" id="CLU_129718_0_0_1"/>
<dbReference type="InParanoid" id="O79882"/>
<dbReference type="OMA" id="WVIYDTG"/>
<dbReference type="OrthoDB" id="9837654at2759"/>
<dbReference type="TreeFam" id="TF343324"/>
<dbReference type="Reactome" id="R-SSC-611105">
    <property type="pathway name" value="Respiratory electron transport"/>
</dbReference>
<dbReference type="Reactome" id="R-SSC-6799198">
    <property type="pathway name" value="Complex I biogenesis"/>
</dbReference>
<dbReference type="Proteomes" id="UP000008227">
    <property type="component" value="Mitochondrion"/>
</dbReference>
<dbReference type="Proteomes" id="UP000314985">
    <property type="component" value="Mitochondrion"/>
</dbReference>
<dbReference type="Proteomes" id="UP000694570">
    <property type="component" value="Unplaced"/>
</dbReference>
<dbReference type="Proteomes" id="UP000694571">
    <property type="component" value="Unplaced"/>
</dbReference>
<dbReference type="Proteomes" id="UP000694720">
    <property type="component" value="Unplaced"/>
</dbReference>
<dbReference type="Proteomes" id="UP000694722">
    <property type="component" value="Unplaced"/>
</dbReference>
<dbReference type="Proteomes" id="UP000694723">
    <property type="component" value="Unplaced"/>
</dbReference>
<dbReference type="Proteomes" id="UP000694724">
    <property type="component" value="Unplaced"/>
</dbReference>
<dbReference type="Proteomes" id="UP000694725">
    <property type="component" value="Unplaced"/>
</dbReference>
<dbReference type="Proteomes" id="UP000694726">
    <property type="component" value="Unplaced"/>
</dbReference>
<dbReference type="Proteomes" id="UP000694727">
    <property type="component" value="Unplaced"/>
</dbReference>
<dbReference type="Proteomes" id="UP000694728">
    <property type="component" value="Unplaced"/>
</dbReference>
<dbReference type="Bgee" id="ENSSSCG00000018092">
    <property type="expression patterns" value="Expressed in adult mammalian kidney and 45 other cell types or tissues"/>
</dbReference>
<dbReference type="ExpressionAtlas" id="O79882">
    <property type="expression patterns" value="baseline and differential"/>
</dbReference>
<dbReference type="GO" id="GO:0005743">
    <property type="term" value="C:mitochondrial inner membrane"/>
    <property type="evidence" value="ECO:0000250"/>
    <property type="project" value="UniProtKB"/>
</dbReference>
<dbReference type="GO" id="GO:0005739">
    <property type="term" value="C:mitochondrion"/>
    <property type="evidence" value="ECO:0000318"/>
    <property type="project" value="GO_Central"/>
</dbReference>
<dbReference type="GO" id="GO:0045271">
    <property type="term" value="C:respiratory chain complex I"/>
    <property type="evidence" value="ECO:0007669"/>
    <property type="project" value="Ensembl"/>
</dbReference>
<dbReference type="GO" id="GO:0008137">
    <property type="term" value="F:NADH dehydrogenase (ubiquinone) activity"/>
    <property type="evidence" value="ECO:0000250"/>
    <property type="project" value="UniProtKB"/>
</dbReference>
<dbReference type="GO" id="GO:0006120">
    <property type="term" value="P:mitochondrial electron transport, NADH to ubiquinone"/>
    <property type="evidence" value="ECO:0000250"/>
    <property type="project" value="UniProtKB"/>
</dbReference>
<dbReference type="GO" id="GO:0032981">
    <property type="term" value="P:mitochondrial respiratory chain complex I assembly"/>
    <property type="evidence" value="ECO:0000250"/>
    <property type="project" value="UniProtKB"/>
</dbReference>
<dbReference type="Gene3D" id="1.20.120.1200">
    <property type="entry name" value="NADH-ubiquinone/plastoquinone oxidoreductase chain 6, subunit NuoJ"/>
    <property type="match status" value="1"/>
</dbReference>
<dbReference type="InterPro" id="IPR050269">
    <property type="entry name" value="ComplexI_Subunit6"/>
</dbReference>
<dbReference type="InterPro" id="IPR001457">
    <property type="entry name" value="NADH_UbQ/plastoQ_OxRdtase_su6"/>
</dbReference>
<dbReference type="InterPro" id="IPR042106">
    <property type="entry name" value="Nuo/plastoQ_OxRdtase_6_NuoJ"/>
</dbReference>
<dbReference type="PANTHER" id="PTHR11435">
    <property type="entry name" value="NADH UBIQUINONE OXIDOREDUCTASE SUBUNIT ND6"/>
    <property type="match status" value="1"/>
</dbReference>
<dbReference type="PANTHER" id="PTHR11435:SF1">
    <property type="entry name" value="NADH-UBIQUINONE OXIDOREDUCTASE CHAIN 6"/>
    <property type="match status" value="1"/>
</dbReference>
<dbReference type="Pfam" id="PF00499">
    <property type="entry name" value="Oxidored_q3"/>
    <property type="match status" value="1"/>
</dbReference>
<organism>
    <name type="scientific">Sus scrofa</name>
    <name type="common">Pig</name>
    <dbReference type="NCBI Taxonomy" id="9823"/>
    <lineage>
        <taxon>Eukaryota</taxon>
        <taxon>Metazoa</taxon>
        <taxon>Chordata</taxon>
        <taxon>Craniata</taxon>
        <taxon>Vertebrata</taxon>
        <taxon>Euteleostomi</taxon>
        <taxon>Mammalia</taxon>
        <taxon>Eutheria</taxon>
        <taxon>Laurasiatheria</taxon>
        <taxon>Artiodactyla</taxon>
        <taxon>Suina</taxon>
        <taxon>Suidae</taxon>
        <taxon>Sus</taxon>
    </lineage>
</organism>
<sequence>MTMYIAFILSTIFVIGFVGFSSKPSPIYGGLGLIVSGGVGCGIVLNFGGSFLGLMVFLIYLGGMLVVFGYTTAMATEMYPEVWVSNKTVFGAFVSGLMMEFCMVYYALKEEEVEIIFKFNGLGDWVIYDTGDSGFFSEEAMGIAALYSYGTWLVIVTGWSLLIGVVVIMEITRGN</sequence>
<accession>O79882</accession>
<keyword id="KW-0002">3D-structure</keyword>
<keyword id="KW-0249">Electron transport</keyword>
<keyword id="KW-0472">Membrane</keyword>
<keyword id="KW-0496">Mitochondrion</keyword>
<keyword id="KW-0999">Mitochondrion inner membrane</keyword>
<keyword id="KW-0520">NAD</keyword>
<keyword id="KW-1185">Reference proteome</keyword>
<keyword id="KW-0679">Respiratory chain</keyword>
<keyword id="KW-1278">Translocase</keyword>
<keyword id="KW-0812">Transmembrane</keyword>
<keyword id="KW-1133">Transmembrane helix</keyword>
<keyword id="KW-0813">Transport</keyword>
<keyword id="KW-0830">Ubiquinone</keyword>
<gene>
    <name type="primary">MT-ND6</name>
    <name type="synonym">MTND6</name>
    <name type="synonym">NADH6</name>
    <name type="synonym">ND6</name>
</gene>